<feature type="chain" id="PRO_0000364795" description="Ferredoxin--NADP reductase 2">
    <location>
        <begin position="1"/>
        <end position="330"/>
    </location>
</feature>
<feature type="binding site" evidence="1">
    <location>
        <position position="37"/>
    </location>
    <ligand>
        <name>FAD</name>
        <dbReference type="ChEBI" id="CHEBI:57692"/>
    </ligand>
</feature>
<feature type="binding site" evidence="1">
    <location>
        <position position="45"/>
    </location>
    <ligand>
        <name>FAD</name>
        <dbReference type="ChEBI" id="CHEBI:57692"/>
    </ligand>
</feature>
<feature type="binding site" evidence="1">
    <location>
        <position position="50"/>
    </location>
    <ligand>
        <name>FAD</name>
        <dbReference type="ChEBI" id="CHEBI:57692"/>
    </ligand>
</feature>
<feature type="binding site" evidence="1">
    <location>
        <position position="90"/>
    </location>
    <ligand>
        <name>FAD</name>
        <dbReference type="ChEBI" id="CHEBI:57692"/>
    </ligand>
</feature>
<feature type="binding site" evidence="1">
    <location>
        <position position="124"/>
    </location>
    <ligand>
        <name>FAD</name>
        <dbReference type="ChEBI" id="CHEBI:57692"/>
    </ligand>
</feature>
<feature type="binding site" evidence="1">
    <location>
        <position position="286"/>
    </location>
    <ligand>
        <name>FAD</name>
        <dbReference type="ChEBI" id="CHEBI:57692"/>
    </ligand>
</feature>
<feature type="binding site" evidence="1">
    <location>
        <position position="327"/>
    </location>
    <ligand>
        <name>FAD</name>
        <dbReference type="ChEBI" id="CHEBI:57692"/>
    </ligand>
</feature>
<keyword id="KW-0274">FAD</keyword>
<keyword id="KW-0285">Flavoprotein</keyword>
<keyword id="KW-0521">NADP</keyword>
<keyword id="KW-0560">Oxidoreductase</keyword>
<keyword id="KW-1185">Reference proteome</keyword>
<name>FENR2_SHOC1</name>
<reference key="1">
    <citation type="submission" date="2003-10" db="EMBL/GenBank/DDBJ databases">
        <title>The complete genome sequence of the alkaliphilic Bacillus clausii KSM-K16.</title>
        <authorList>
            <person name="Takaki Y."/>
            <person name="Kageyama Y."/>
            <person name="Shimamura S."/>
            <person name="Suzuki H."/>
            <person name="Nishi S."/>
            <person name="Hatada Y."/>
            <person name="Kawai S."/>
            <person name="Ito S."/>
            <person name="Horikoshi K."/>
        </authorList>
    </citation>
    <scope>NUCLEOTIDE SEQUENCE [LARGE SCALE GENOMIC DNA]</scope>
    <source>
        <strain>KSM-K16</strain>
    </source>
</reference>
<sequence>MQEQKDMFDLTIIGGGPAGLFAAFYAGMRKMKVKVIESMPQLGGQLSALYPDKYIYDVAGFPKVKAQDLVDQLTAQAQQFQPEIVLEEAVQTLEKQEDETFVLTTDANIHYTKAVLITAGAGAFAPRKLQVEKADFYEDKNIHYFIRDLSAFTGKRVVVIGGGDSAVDWALMLEPIAKEVTLVHRRDAFRAHEHSVDLLKKSSVRILTPYETAELHGDENGVTAVTFSEVKGDQTETIAVDDVIVNFGFVSTLGPIKEWGLEIRKNAIPVNTKMETNIPGVYAAGDVSTYDGKIKLIATGFGEAPTAVNNAKVYIDPTARAFPGHSTSLF</sequence>
<evidence type="ECO:0000255" key="1">
    <source>
        <dbReference type="HAMAP-Rule" id="MF_01685"/>
    </source>
</evidence>
<organism>
    <name type="scientific">Shouchella clausii (strain KSM-K16)</name>
    <name type="common">Alkalihalobacillus clausii</name>
    <dbReference type="NCBI Taxonomy" id="66692"/>
    <lineage>
        <taxon>Bacteria</taxon>
        <taxon>Bacillati</taxon>
        <taxon>Bacillota</taxon>
        <taxon>Bacilli</taxon>
        <taxon>Bacillales</taxon>
        <taxon>Bacillaceae</taxon>
        <taxon>Shouchella</taxon>
    </lineage>
</organism>
<comment type="catalytic activity">
    <reaction evidence="1">
        <text>2 reduced [2Fe-2S]-[ferredoxin] + NADP(+) + H(+) = 2 oxidized [2Fe-2S]-[ferredoxin] + NADPH</text>
        <dbReference type="Rhea" id="RHEA:20125"/>
        <dbReference type="Rhea" id="RHEA-COMP:10000"/>
        <dbReference type="Rhea" id="RHEA-COMP:10001"/>
        <dbReference type="ChEBI" id="CHEBI:15378"/>
        <dbReference type="ChEBI" id="CHEBI:33737"/>
        <dbReference type="ChEBI" id="CHEBI:33738"/>
        <dbReference type="ChEBI" id="CHEBI:57783"/>
        <dbReference type="ChEBI" id="CHEBI:58349"/>
        <dbReference type="EC" id="1.18.1.2"/>
    </reaction>
</comment>
<comment type="cofactor">
    <cofactor evidence="1">
        <name>FAD</name>
        <dbReference type="ChEBI" id="CHEBI:57692"/>
    </cofactor>
    <text evidence="1">Binds 1 FAD per subunit.</text>
</comment>
<comment type="subunit">
    <text evidence="1">Homodimer.</text>
</comment>
<comment type="similarity">
    <text evidence="1">Belongs to the ferredoxin--NADP reductase type 2 family.</text>
</comment>
<gene>
    <name type="ordered locus">ABC2925</name>
</gene>
<dbReference type="EC" id="1.18.1.2" evidence="1"/>
<dbReference type="EMBL" id="AP006627">
    <property type="protein sequence ID" value="BAD65459.1"/>
    <property type="molecule type" value="Genomic_DNA"/>
</dbReference>
<dbReference type="SMR" id="Q5WDV1"/>
<dbReference type="STRING" id="66692.ABC2925"/>
<dbReference type="KEGG" id="bcl:ABC2925"/>
<dbReference type="eggNOG" id="COG0492">
    <property type="taxonomic scope" value="Bacteria"/>
</dbReference>
<dbReference type="HOGENOM" id="CLU_031864_5_5_9"/>
<dbReference type="OrthoDB" id="9806179at2"/>
<dbReference type="Proteomes" id="UP000001168">
    <property type="component" value="Chromosome"/>
</dbReference>
<dbReference type="GO" id="GO:0004324">
    <property type="term" value="F:ferredoxin-NADP+ reductase activity"/>
    <property type="evidence" value="ECO:0007669"/>
    <property type="project" value="UniProtKB-UniRule"/>
</dbReference>
<dbReference type="GO" id="GO:0050660">
    <property type="term" value="F:flavin adenine dinucleotide binding"/>
    <property type="evidence" value="ECO:0007669"/>
    <property type="project" value="UniProtKB-UniRule"/>
</dbReference>
<dbReference type="GO" id="GO:0050661">
    <property type="term" value="F:NADP binding"/>
    <property type="evidence" value="ECO:0007669"/>
    <property type="project" value="UniProtKB-UniRule"/>
</dbReference>
<dbReference type="Gene3D" id="3.50.50.60">
    <property type="entry name" value="FAD/NAD(P)-binding domain"/>
    <property type="match status" value="2"/>
</dbReference>
<dbReference type="HAMAP" id="MF_01685">
    <property type="entry name" value="FENR2"/>
    <property type="match status" value="1"/>
</dbReference>
<dbReference type="InterPro" id="IPR036188">
    <property type="entry name" value="FAD/NAD-bd_sf"/>
</dbReference>
<dbReference type="InterPro" id="IPR023753">
    <property type="entry name" value="FAD/NAD-binding_dom"/>
</dbReference>
<dbReference type="InterPro" id="IPR022890">
    <property type="entry name" value="Fd--NADP_Rdtase_type_2"/>
</dbReference>
<dbReference type="InterPro" id="IPR050097">
    <property type="entry name" value="Ferredoxin-NADP_redctase_2"/>
</dbReference>
<dbReference type="PANTHER" id="PTHR48105">
    <property type="entry name" value="THIOREDOXIN REDUCTASE 1-RELATED-RELATED"/>
    <property type="match status" value="1"/>
</dbReference>
<dbReference type="Pfam" id="PF07992">
    <property type="entry name" value="Pyr_redox_2"/>
    <property type="match status" value="1"/>
</dbReference>
<dbReference type="PRINTS" id="PR00368">
    <property type="entry name" value="FADPNR"/>
</dbReference>
<dbReference type="PRINTS" id="PR00469">
    <property type="entry name" value="PNDRDTASEII"/>
</dbReference>
<dbReference type="SUPFAM" id="SSF51905">
    <property type="entry name" value="FAD/NAD(P)-binding domain"/>
    <property type="match status" value="1"/>
</dbReference>
<protein>
    <recommendedName>
        <fullName evidence="1">Ferredoxin--NADP reductase 2</fullName>
        <shortName evidence="1">FNR 2</shortName>
        <shortName evidence="1">Fd-NADP(+) reductase 2</shortName>
        <ecNumber evidence="1">1.18.1.2</ecNumber>
    </recommendedName>
</protein>
<proteinExistence type="inferred from homology"/>
<accession>Q5WDV1</accession>